<dbReference type="EC" id="2.6.1.11" evidence="1"/>
<dbReference type="EMBL" id="AE000657">
    <property type="protein sequence ID" value="AAC06390.1"/>
    <property type="molecule type" value="Genomic_DNA"/>
</dbReference>
<dbReference type="PIR" id="G70301">
    <property type="entry name" value="G70301"/>
</dbReference>
<dbReference type="RefSeq" id="NP_213001.1">
    <property type="nucleotide sequence ID" value="NC_000918.1"/>
</dbReference>
<dbReference type="RefSeq" id="WP_010879939.1">
    <property type="nucleotide sequence ID" value="NC_000918.1"/>
</dbReference>
<dbReference type="PDB" id="2EH6">
    <property type="method" value="X-ray"/>
    <property type="resolution" value="1.90 A"/>
    <property type="chains" value="A/B=2-376"/>
</dbReference>
<dbReference type="PDBsum" id="2EH6"/>
<dbReference type="SMR" id="O66442"/>
<dbReference type="FunCoup" id="O66442">
    <property type="interactions" value="424"/>
</dbReference>
<dbReference type="STRING" id="224324.aq_023"/>
<dbReference type="EnsemblBacteria" id="AAC06390">
    <property type="protein sequence ID" value="AAC06390"/>
    <property type="gene ID" value="aq_023"/>
</dbReference>
<dbReference type="KEGG" id="aae:aq_023"/>
<dbReference type="PATRIC" id="fig|224324.8.peg.16"/>
<dbReference type="eggNOG" id="COG4992">
    <property type="taxonomic scope" value="Bacteria"/>
</dbReference>
<dbReference type="HOGENOM" id="CLU_016922_10_1_0"/>
<dbReference type="InParanoid" id="O66442"/>
<dbReference type="OrthoDB" id="9807885at2"/>
<dbReference type="UniPathway" id="UPA00068">
    <property type="reaction ID" value="UER00109"/>
</dbReference>
<dbReference type="EvolutionaryTrace" id="O66442"/>
<dbReference type="Proteomes" id="UP000000798">
    <property type="component" value="Chromosome"/>
</dbReference>
<dbReference type="GO" id="GO:0005737">
    <property type="term" value="C:cytoplasm"/>
    <property type="evidence" value="ECO:0007669"/>
    <property type="project" value="UniProtKB-SubCell"/>
</dbReference>
<dbReference type="GO" id="GO:0042802">
    <property type="term" value="F:identical protein binding"/>
    <property type="evidence" value="ECO:0000318"/>
    <property type="project" value="GO_Central"/>
</dbReference>
<dbReference type="GO" id="GO:0003992">
    <property type="term" value="F:N2-acetyl-L-ornithine:2-oxoglutarate 5-aminotransferase activity"/>
    <property type="evidence" value="ECO:0007669"/>
    <property type="project" value="UniProtKB-UniRule"/>
</dbReference>
<dbReference type="GO" id="GO:0030170">
    <property type="term" value="F:pyridoxal phosphate binding"/>
    <property type="evidence" value="ECO:0000318"/>
    <property type="project" value="GO_Central"/>
</dbReference>
<dbReference type="GO" id="GO:0006526">
    <property type="term" value="P:L-arginine biosynthetic process"/>
    <property type="evidence" value="ECO:0007669"/>
    <property type="project" value="UniProtKB-UniRule"/>
</dbReference>
<dbReference type="CDD" id="cd00610">
    <property type="entry name" value="OAT_like"/>
    <property type="match status" value="1"/>
</dbReference>
<dbReference type="FunFam" id="3.40.640.10:FF:000004">
    <property type="entry name" value="Acetylornithine aminotransferase"/>
    <property type="match status" value="1"/>
</dbReference>
<dbReference type="Gene3D" id="3.90.1150.10">
    <property type="entry name" value="Aspartate Aminotransferase, domain 1"/>
    <property type="match status" value="1"/>
</dbReference>
<dbReference type="Gene3D" id="3.40.640.10">
    <property type="entry name" value="Type I PLP-dependent aspartate aminotransferase-like (Major domain)"/>
    <property type="match status" value="1"/>
</dbReference>
<dbReference type="HAMAP" id="MF_01107">
    <property type="entry name" value="ArgD_aminotrans_3"/>
    <property type="match status" value="1"/>
</dbReference>
<dbReference type="InterPro" id="IPR004636">
    <property type="entry name" value="AcOrn/SuccOrn_fam"/>
</dbReference>
<dbReference type="InterPro" id="IPR005814">
    <property type="entry name" value="Aminotrans_3"/>
</dbReference>
<dbReference type="InterPro" id="IPR049704">
    <property type="entry name" value="Aminotrans_3_PPA_site"/>
</dbReference>
<dbReference type="InterPro" id="IPR050103">
    <property type="entry name" value="Class-III_PLP-dep_AT"/>
</dbReference>
<dbReference type="InterPro" id="IPR015424">
    <property type="entry name" value="PyrdxlP-dep_Trfase"/>
</dbReference>
<dbReference type="InterPro" id="IPR015421">
    <property type="entry name" value="PyrdxlP-dep_Trfase_major"/>
</dbReference>
<dbReference type="InterPro" id="IPR015422">
    <property type="entry name" value="PyrdxlP-dep_Trfase_small"/>
</dbReference>
<dbReference type="NCBIfam" id="TIGR00707">
    <property type="entry name" value="argD"/>
    <property type="match status" value="1"/>
</dbReference>
<dbReference type="NCBIfam" id="NF002325">
    <property type="entry name" value="PRK01278.1"/>
    <property type="match status" value="1"/>
</dbReference>
<dbReference type="PANTHER" id="PTHR11986:SF79">
    <property type="entry name" value="ACETYLORNITHINE AMINOTRANSFERASE, MITOCHONDRIAL"/>
    <property type="match status" value="1"/>
</dbReference>
<dbReference type="PANTHER" id="PTHR11986">
    <property type="entry name" value="AMINOTRANSFERASE CLASS III"/>
    <property type="match status" value="1"/>
</dbReference>
<dbReference type="Pfam" id="PF00202">
    <property type="entry name" value="Aminotran_3"/>
    <property type="match status" value="1"/>
</dbReference>
<dbReference type="PIRSF" id="PIRSF000521">
    <property type="entry name" value="Transaminase_4ab_Lys_Orn"/>
    <property type="match status" value="1"/>
</dbReference>
<dbReference type="SUPFAM" id="SSF53383">
    <property type="entry name" value="PLP-dependent transferases"/>
    <property type="match status" value="1"/>
</dbReference>
<dbReference type="PROSITE" id="PS00600">
    <property type="entry name" value="AA_TRANSFER_CLASS_3"/>
    <property type="match status" value="1"/>
</dbReference>
<comment type="catalytic activity">
    <reaction evidence="1">
        <text>N(2)-acetyl-L-ornithine + 2-oxoglutarate = N-acetyl-L-glutamate 5-semialdehyde + L-glutamate</text>
        <dbReference type="Rhea" id="RHEA:18049"/>
        <dbReference type="ChEBI" id="CHEBI:16810"/>
        <dbReference type="ChEBI" id="CHEBI:29123"/>
        <dbReference type="ChEBI" id="CHEBI:29985"/>
        <dbReference type="ChEBI" id="CHEBI:57805"/>
        <dbReference type="EC" id="2.6.1.11"/>
    </reaction>
</comment>
<comment type="cofactor">
    <cofactor evidence="1">
        <name>pyridoxal 5'-phosphate</name>
        <dbReference type="ChEBI" id="CHEBI:597326"/>
    </cofactor>
    <text evidence="1">Binds 1 pyridoxal phosphate per subunit.</text>
</comment>
<comment type="pathway">
    <text evidence="1">Amino-acid biosynthesis; L-arginine biosynthesis; N(2)-acetyl-L-ornithine from L-glutamate: step 4/4.</text>
</comment>
<comment type="subunit">
    <text evidence="1 3">Homodimer.</text>
</comment>
<comment type="subcellular location">
    <subcellularLocation>
        <location evidence="1">Cytoplasm</location>
    </subcellularLocation>
</comment>
<comment type="miscellaneous">
    <text evidence="1">May also have succinyldiaminopimelate aminotransferase activity, thus carrying out the corresponding step in lysine biosynthesis.</text>
</comment>
<comment type="similarity">
    <text evidence="1">Belongs to the class-III pyridoxal-phosphate-dependent aminotransferase family. ArgD subfamily.</text>
</comment>
<protein>
    <recommendedName>
        <fullName evidence="1">Acetylornithine aminotransferase</fullName>
        <shortName evidence="1">ACOAT</shortName>
        <ecNumber evidence="1">2.6.1.11</ecNumber>
    </recommendedName>
</protein>
<sequence length="376" mass="42009">MTYLMNNYARLPVKFVRGKGVYLYDEEGKEYLDFVSGIGVNSLGHAYPKLTEALKEQVEKLLHVSNLYENPWQEELAHKLVKHFWTEGKVFFANSGTESVEAAIKLARKYWRDKGKNKWKFISFENSFHGRTYGSLSATGQPKFHKGFEPLVPGFSYAKLNDIDSVYKLLDEETAGIIIEVIQGEGGVNEASEDFLSKLQEICKEKDVLLIIDEVQTGIGRTGEFYAYQHFNLKPDVIALAKGLGGGVPIGAILAREEVAQSFTPGSHGSTFGGNPLACRAGTVVVDEVEKLLPHVREVGNYFKEKLKELGKGKVKGRGLMLGLELERECKDYVLKALEKGLLINCTAGKVLRFLPPLIIQKEHIDRAISVLREIL</sequence>
<feature type="chain" id="PRO_0000112715" description="Acetylornithine aminotransferase">
    <location>
        <begin position="1"/>
        <end position="376"/>
    </location>
</feature>
<feature type="binding site" evidence="1 2">
    <location>
        <begin position="96"/>
        <end position="97"/>
    </location>
    <ligand>
        <name>pyridoxal 5'-phosphate</name>
        <dbReference type="ChEBI" id="CHEBI:597326"/>
    </ligand>
</feature>
<feature type="binding site" evidence="1 3">
    <location>
        <position position="128"/>
    </location>
    <ligand>
        <name>pyridoxal 5'-phosphate</name>
        <dbReference type="ChEBI" id="CHEBI:597326"/>
    </ligand>
</feature>
<feature type="binding site" evidence="1">
    <location>
        <position position="131"/>
    </location>
    <ligand>
        <name>N(2)-acetyl-L-ornithine</name>
        <dbReference type="ChEBI" id="CHEBI:57805"/>
    </ligand>
</feature>
<feature type="binding site" evidence="1 3">
    <location>
        <begin position="213"/>
        <end position="216"/>
    </location>
    <ligand>
        <name>pyridoxal 5'-phosphate</name>
        <dbReference type="ChEBI" id="CHEBI:597326"/>
    </ligand>
</feature>
<feature type="binding site" evidence="1">
    <location>
        <position position="270"/>
    </location>
    <ligand>
        <name>N(2)-acetyl-L-ornithine</name>
        <dbReference type="ChEBI" id="CHEBI:57805"/>
    </ligand>
</feature>
<feature type="binding site" evidence="1 2">
    <location>
        <position position="271"/>
    </location>
    <ligand>
        <name>pyridoxal 5'-phosphate</name>
        <dbReference type="ChEBI" id="CHEBI:597326"/>
    </ligand>
</feature>
<feature type="modified residue" description="N6-(pyridoxal phosphate)lysine" evidence="1 2">
    <location>
        <position position="242"/>
    </location>
</feature>
<feature type="strand" evidence="4">
    <location>
        <begin position="11"/>
        <end position="20"/>
    </location>
</feature>
<feature type="strand" evidence="4">
    <location>
        <begin position="22"/>
        <end position="25"/>
    </location>
</feature>
<feature type="strand" evidence="4">
    <location>
        <begin position="30"/>
        <end position="35"/>
    </location>
</feature>
<feature type="helix" evidence="4">
    <location>
        <begin position="36"/>
        <end position="39"/>
    </location>
</feature>
<feature type="helix" evidence="4">
    <location>
        <begin position="48"/>
        <end position="60"/>
    </location>
</feature>
<feature type="helix" evidence="4">
    <location>
        <begin position="71"/>
        <end position="82"/>
    </location>
</feature>
<feature type="strand" evidence="4">
    <location>
        <begin position="84"/>
        <end position="86"/>
    </location>
</feature>
<feature type="strand" evidence="4">
    <location>
        <begin position="88"/>
        <end position="95"/>
    </location>
</feature>
<feature type="helix" evidence="4">
    <location>
        <begin position="96"/>
        <end position="113"/>
    </location>
</feature>
<feature type="strand" evidence="4">
    <location>
        <begin position="120"/>
        <end position="125"/>
    </location>
</feature>
<feature type="helix" evidence="4">
    <location>
        <begin position="133"/>
        <end position="138"/>
    </location>
</feature>
<feature type="helix" evidence="4">
    <location>
        <begin position="142"/>
        <end position="144"/>
    </location>
</feature>
<feature type="turn" evidence="4">
    <location>
        <begin position="145"/>
        <end position="148"/>
    </location>
</feature>
<feature type="strand" evidence="4">
    <location>
        <begin position="153"/>
        <end position="158"/>
    </location>
</feature>
<feature type="helix" evidence="4">
    <location>
        <begin position="163"/>
        <end position="167"/>
    </location>
</feature>
<feature type="strand" evidence="4">
    <location>
        <begin position="174"/>
        <end position="179"/>
    </location>
</feature>
<feature type="strand" evidence="4">
    <location>
        <begin position="181"/>
        <end position="183"/>
    </location>
</feature>
<feature type="turn" evidence="4">
    <location>
        <begin position="184"/>
        <end position="187"/>
    </location>
</feature>
<feature type="strand" evidence="4">
    <location>
        <begin position="188"/>
        <end position="190"/>
    </location>
</feature>
<feature type="helix" evidence="4">
    <location>
        <begin position="193"/>
        <end position="206"/>
    </location>
</feature>
<feature type="strand" evidence="4">
    <location>
        <begin position="209"/>
        <end position="213"/>
    </location>
</feature>
<feature type="turn" evidence="4">
    <location>
        <begin position="215"/>
        <end position="222"/>
    </location>
</feature>
<feature type="strand" evidence="4">
    <location>
        <begin position="223"/>
        <end position="226"/>
    </location>
</feature>
<feature type="helix" evidence="4">
    <location>
        <begin position="227"/>
        <end position="231"/>
    </location>
</feature>
<feature type="strand" evidence="4">
    <location>
        <begin position="236"/>
        <end position="240"/>
    </location>
</feature>
<feature type="helix" evidence="4">
    <location>
        <begin position="242"/>
        <end position="245"/>
    </location>
</feature>
<feature type="strand" evidence="4">
    <location>
        <begin position="251"/>
        <end position="256"/>
    </location>
</feature>
<feature type="helix" evidence="4">
    <location>
        <begin position="257"/>
        <end position="260"/>
    </location>
</feature>
<feature type="helix" evidence="4">
    <location>
        <begin position="276"/>
        <end position="309"/>
    </location>
</feature>
<feature type="strand" evidence="4">
    <location>
        <begin position="312"/>
        <end position="318"/>
    </location>
</feature>
<feature type="strand" evidence="4">
    <location>
        <begin position="321"/>
        <end position="325"/>
    </location>
</feature>
<feature type="helix" evidence="4">
    <location>
        <begin position="331"/>
        <end position="339"/>
    </location>
</feature>
<feature type="strand" evidence="4">
    <location>
        <begin position="345"/>
        <end position="347"/>
    </location>
</feature>
<feature type="turn" evidence="4">
    <location>
        <begin position="348"/>
        <end position="350"/>
    </location>
</feature>
<feature type="strand" evidence="4">
    <location>
        <begin position="351"/>
        <end position="354"/>
    </location>
</feature>
<feature type="helix" evidence="4">
    <location>
        <begin position="362"/>
        <end position="375"/>
    </location>
</feature>
<evidence type="ECO:0000255" key="1">
    <source>
        <dbReference type="HAMAP-Rule" id="MF_01107"/>
    </source>
</evidence>
<evidence type="ECO:0000269" key="2">
    <source ref="2"/>
</evidence>
<evidence type="ECO:0000305" key="3">
    <source ref="2"/>
</evidence>
<evidence type="ECO:0007829" key="4">
    <source>
        <dbReference type="PDB" id="2EH6"/>
    </source>
</evidence>
<proteinExistence type="evidence at protein level"/>
<name>ARGD_AQUAE</name>
<keyword id="KW-0002">3D-structure</keyword>
<keyword id="KW-0028">Amino-acid biosynthesis</keyword>
<keyword id="KW-0032">Aminotransferase</keyword>
<keyword id="KW-0055">Arginine biosynthesis</keyword>
<keyword id="KW-0963">Cytoplasm</keyword>
<keyword id="KW-0663">Pyridoxal phosphate</keyword>
<keyword id="KW-1185">Reference proteome</keyword>
<keyword id="KW-0808">Transferase</keyword>
<reference key="1">
    <citation type="journal article" date="1998" name="Nature">
        <title>The complete genome of the hyperthermophilic bacterium Aquifex aeolicus.</title>
        <authorList>
            <person name="Deckert G."/>
            <person name="Warren P.V."/>
            <person name="Gaasterland T."/>
            <person name="Young W.G."/>
            <person name="Lenox A.L."/>
            <person name="Graham D.E."/>
            <person name="Overbeek R."/>
            <person name="Snead M.A."/>
            <person name="Keller M."/>
            <person name="Aujay M."/>
            <person name="Huber R."/>
            <person name="Feldman R.A."/>
            <person name="Short J.M."/>
            <person name="Olsen G.J."/>
            <person name="Swanson R.V."/>
        </authorList>
    </citation>
    <scope>NUCLEOTIDE SEQUENCE [LARGE SCALE GENOMIC DNA]</scope>
    <source>
        <strain>VF5</strain>
    </source>
</reference>
<reference key="2">
    <citation type="submission" date="2009-02" db="PDB data bank">
        <title>Crystal structure of acetylornithine aminotransferase from Aquifex aeolicus vf5.</title>
        <authorList>
            <consortium name="RIKEN structural genomics initiative (RSGI)"/>
        </authorList>
    </citation>
    <scope>X-RAY CRYSTALLOGRAPHY (1.9 ANGSTROMS) OF 2-376 IN COMPLEX WITH PLP</scope>
    <source>
        <strain>VF5</strain>
    </source>
</reference>
<gene>
    <name evidence="1" type="primary">argD</name>
    <name type="ordered locus">aq_023</name>
</gene>
<organism>
    <name type="scientific">Aquifex aeolicus (strain VF5)</name>
    <dbReference type="NCBI Taxonomy" id="224324"/>
    <lineage>
        <taxon>Bacteria</taxon>
        <taxon>Pseudomonadati</taxon>
        <taxon>Aquificota</taxon>
        <taxon>Aquificia</taxon>
        <taxon>Aquificales</taxon>
        <taxon>Aquificaceae</taxon>
        <taxon>Aquifex</taxon>
    </lineage>
</organism>
<accession>O66442</accession>